<accession>A6W5T5</accession>
<reference key="1">
    <citation type="journal article" date="2008" name="PLoS ONE">
        <title>Survival in nuclear waste, extreme resistance, and potential applications gleaned from the genome sequence of Kineococcus radiotolerans SRS30216.</title>
        <authorList>
            <person name="Bagwell C.E."/>
            <person name="Bhat S."/>
            <person name="Hawkins G.M."/>
            <person name="Smith B.W."/>
            <person name="Biswas T."/>
            <person name="Hoover T.R."/>
            <person name="Saunders E."/>
            <person name="Han C.S."/>
            <person name="Tsodikov O.V."/>
            <person name="Shimkets L.J."/>
        </authorList>
    </citation>
    <scope>NUCLEOTIDE SEQUENCE [LARGE SCALE GENOMIC DNA]</scope>
    <source>
        <strain>ATCC BAA-149 / DSM 14245 / SRS30216</strain>
    </source>
</reference>
<organism>
    <name type="scientific">Kineococcus radiotolerans (strain ATCC BAA-149 / DSM 14245 / SRS30216)</name>
    <dbReference type="NCBI Taxonomy" id="266940"/>
    <lineage>
        <taxon>Bacteria</taxon>
        <taxon>Bacillati</taxon>
        <taxon>Actinomycetota</taxon>
        <taxon>Actinomycetes</taxon>
        <taxon>Kineosporiales</taxon>
        <taxon>Kineosporiaceae</taxon>
        <taxon>Kineococcus</taxon>
    </lineage>
</organism>
<evidence type="ECO:0000250" key="1"/>
<evidence type="ECO:0000255" key="2">
    <source>
        <dbReference type="HAMAP-Rule" id="MF_00118"/>
    </source>
</evidence>
<gene>
    <name evidence="2" type="primary">tuf</name>
    <name type="ordered locus">Krad_0685</name>
</gene>
<name>EFTU_KINRD</name>
<sequence length="397" mass="43715">MAKAKFERTKPHVNIGTIGHIDHGKTTLTAAITRVLHDKFPELNKASAFDQIDKAPEERQRGITISIAHVEYQTEARHYAHVDCPGHADYIKNMITGAAQMDGAILVVAATDGPMPQTKEHVILARQVGVPYIVVALNKADMVEDEELLELVEMEVRELLSSYEFPGDDVPVVRVSALKALEGDAEWGDKLMELMDAVDTAIPEPERAIDQPFLMPIEDVFTITGRGTVVTGRIERGVLNVNQEVEVVGIKPTSTKTTVTSIEMFNKMLDTGQAGDNAALLLRGLKRDDVERGQVVVKPGSITPHTEFEGQAYILSKDEGGRHTPFYNNYRPQFYFRTTDVTGVVSLPEGTEMVMPGDNTEMKVDLIQPIAMEEGLKFAIREGGRTVGAGRVVKILK</sequence>
<dbReference type="EC" id="3.6.5.3" evidence="2"/>
<dbReference type="EMBL" id="CP000750">
    <property type="protein sequence ID" value="ABS02174.1"/>
    <property type="molecule type" value="Genomic_DNA"/>
</dbReference>
<dbReference type="RefSeq" id="WP_012084984.1">
    <property type="nucleotide sequence ID" value="NC_009664.2"/>
</dbReference>
<dbReference type="SMR" id="A6W5T5"/>
<dbReference type="STRING" id="266940.Krad_0685"/>
<dbReference type="KEGG" id="kra:Krad_0685"/>
<dbReference type="eggNOG" id="COG0050">
    <property type="taxonomic scope" value="Bacteria"/>
</dbReference>
<dbReference type="HOGENOM" id="CLU_007265_0_1_11"/>
<dbReference type="OrthoDB" id="9803139at2"/>
<dbReference type="Proteomes" id="UP000001116">
    <property type="component" value="Chromosome"/>
</dbReference>
<dbReference type="GO" id="GO:0005829">
    <property type="term" value="C:cytosol"/>
    <property type="evidence" value="ECO:0007669"/>
    <property type="project" value="TreeGrafter"/>
</dbReference>
<dbReference type="GO" id="GO:0005525">
    <property type="term" value="F:GTP binding"/>
    <property type="evidence" value="ECO:0007669"/>
    <property type="project" value="UniProtKB-UniRule"/>
</dbReference>
<dbReference type="GO" id="GO:0003924">
    <property type="term" value="F:GTPase activity"/>
    <property type="evidence" value="ECO:0007669"/>
    <property type="project" value="InterPro"/>
</dbReference>
<dbReference type="GO" id="GO:0003746">
    <property type="term" value="F:translation elongation factor activity"/>
    <property type="evidence" value="ECO:0007669"/>
    <property type="project" value="UniProtKB-UniRule"/>
</dbReference>
<dbReference type="CDD" id="cd01884">
    <property type="entry name" value="EF_Tu"/>
    <property type="match status" value="1"/>
</dbReference>
<dbReference type="CDD" id="cd03697">
    <property type="entry name" value="EFTU_II"/>
    <property type="match status" value="1"/>
</dbReference>
<dbReference type="CDD" id="cd03707">
    <property type="entry name" value="EFTU_III"/>
    <property type="match status" value="1"/>
</dbReference>
<dbReference type="FunFam" id="2.40.30.10:FF:000001">
    <property type="entry name" value="Elongation factor Tu"/>
    <property type="match status" value="1"/>
</dbReference>
<dbReference type="FunFam" id="3.40.50.300:FF:000003">
    <property type="entry name" value="Elongation factor Tu"/>
    <property type="match status" value="1"/>
</dbReference>
<dbReference type="Gene3D" id="3.40.50.300">
    <property type="entry name" value="P-loop containing nucleotide triphosphate hydrolases"/>
    <property type="match status" value="1"/>
</dbReference>
<dbReference type="Gene3D" id="2.40.30.10">
    <property type="entry name" value="Translation factors"/>
    <property type="match status" value="2"/>
</dbReference>
<dbReference type="HAMAP" id="MF_00118_B">
    <property type="entry name" value="EF_Tu_B"/>
    <property type="match status" value="1"/>
</dbReference>
<dbReference type="InterPro" id="IPR041709">
    <property type="entry name" value="EF-Tu_GTP-bd"/>
</dbReference>
<dbReference type="InterPro" id="IPR050055">
    <property type="entry name" value="EF-Tu_GTPase"/>
</dbReference>
<dbReference type="InterPro" id="IPR004161">
    <property type="entry name" value="EFTu-like_2"/>
</dbReference>
<dbReference type="InterPro" id="IPR033720">
    <property type="entry name" value="EFTU_2"/>
</dbReference>
<dbReference type="InterPro" id="IPR031157">
    <property type="entry name" value="G_TR_CS"/>
</dbReference>
<dbReference type="InterPro" id="IPR027417">
    <property type="entry name" value="P-loop_NTPase"/>
</dbReference>
<dbReference type="InterPro" id="IPR005225">
    <property type="entry name" value="Small_GTP-bd"/>
</dbReference>
<dbReference type="InterPro" id="IPR000795">
    <property type="entry name" value="T_Tr_GTP-bd_dom"/>
</dbReference>
<dbReference type="InterPro" id="IPR009000">
    <property type="entry name" value="Transl_B-barrel_sf"/>
</dbReference>
<dbReference type="InterPro" id="IPR009001">
    <property type="entry name" value="Transl_elong_EF1A/Init_IF2_C"/>
</dbReference>
<dbReference type="InterPro" id="IPR004541">
    <property type="entry name" value="Transl_elong_EFTu/EF1A_bac/org"/>
</dbReference>
<dbReference type="InterPro" id="IPR004160">
    <property type="entry name" value="Transl_elong_EFTu/EF1A_C"/>
</dbReference>
<dbReference type="NCBIfam" id="TIGR00485">
    <property type="entry name" value="EF-Tu"/>
    <property type="match status" value="1"/>
</dbReference>
<dbReference type="NCBIfam" id="NF000766">
    <property type="entry name" value="PRK00049.1"/>
    <property type="match status" value="1"/>
</dbReference>
<dbReference type="NCBIfam" id="NF009372">
    <property type="entry name" value="PRK12735.1"/>
    <property type="match status" value="1"/>
</dbReference>
<dbReference type="NCBIfam" id="NF009373">
    <property type="entry name" value="PRK12736.1"/>
    <property type="match status" value="1"/>
</dbReference>
<dbReference type="NCBIfam" id="TIGR00231">
    <property type="entry name" value="small_GTP"/>
    <property type="match status" value="1"/>
</dbReference>
<dbReference type="PANTHER" id="PTHR43721:SF22">
    <property type="entry name" value="ELONGATION FACTOR TU, MITOCHONDRIAL"/>
    <property type="match status" value="1"/>
</dbReference>
<dbReference type="PANTHER" id="PTHR43721">
    <property type="entry name" value="ELONGATION FACTOR TU-RELATED"/>
    <property type="match status" value="1"/>
</dbReference>
<dbReference type="Pfam" id="PF00009">
    <property type="entry name" value="GTP_EFTU"/>
    <property type="match status" value="1"/>
</dbReference>
<dbReference type="Pfam" id="PF03144">
    <property type="entry name" value="GTP_EFTU_D2"/>
    <property type="match status" value="1"/>
</dbReference>
<dbReference type="Pfam" id="PF03143">
    <property type="entry name" value="GTP_EFTU_D3"/>
    <property type="match status" value="1"/>
</dbReference>
<dbReference type="PRINTS" id="PR00315">
    <property type="entry name" value="ELONGATNFCT"/>
</dbReference>
<dbReference type="SUPFAM" id="SSF50465">
    <property type="entry name" value="EF-Tu/eEF-1alpha/eIF2-gamma C-terminal domain"/>
    <property type="match status" value="1"/>
</dbReference>
<dbReference type="SUPFAM" id="SSF52540">
    <property type="entry name" value="P-loop containing nucleoside triphosphate hydrolases"/>
    <property type="match status" value="1"/>
</dbReference>
<dbReference type="SUPFAM" id="SSF50447">
    <property type="entry name" value="Translation proteins"/>
    <property type="match status" value="1"/>
</dbReference>
<dbReference type="PROSITE" id="PS00301">
    <property type="entry name" value="G_TR_1"/>
    <property type="match status" value="1"/>
</dbReference>
<dbReference type="PROSITE" id="PS51722">
    <property type="entry name" value="G_TR_2"/>
    <property type="match status" value="1"/>
</dbReference>
<proteinExistence type="inferred from homology"/>
<protein>
    <recommendedName>
        <fullName evidence="2">Elongation factor Tu</fullName>
        <shortName evidence="2">EF-Tu</shortName>
        <ecNumber evidence="2">3.6.5.3</ecNumber>
    </recommendedName>
</protein>
<comment type="function">
    <text evidence="2">GTP hydrolase that promotes the GTP-dependent binding of aminoacyl-tRNA to the A-site of ribosomes during protein biosynthesis.</text>
</comment>
<comment type="catalytic activity">
    <reaction evidence="2">
        <text>GTP + H2O = GDP + phosphate + H(+)</text>
        <dbReference type="Rhea" id="RHEA:19669"/>
        <dbReference type="ChEBI" id="CHEBI:15377"/>
        <dbReference type="ChEBI" id="CHEBI:15378"/>
        <dbReference type="ChEBI" id="CHEBI:37565"/>
        <dbReference type="ChEBI" id="CHEBI:43474"/>
        <dbReference type="ChEBI" id="CHEBI:58189"/>
        <dbReference type="EC" id="3.6.5.3"/>
    </reaction>
    <physiologicalReaction direction="left-to-right" evidence="2">
        <dbReference type="Rhea" id="RHEA:19670"/>
    </physiologicalReaction>
</comment>
<comment type="subunit">
    <text evidence="2">Monomer.</text>
</comment>
<comment type="subcellular location">
    <subcellularLocation>
        <location evidence="2">Cytoplasm</location>
    </subcellularLocation>
</comment>
<comment type="similarity">
    <text evidence="2">Belongs to the TRAFAC class translation factor GTPase superfamily. Classic translation factor GTPase family. EF-Tu/EF-1A subfamily.</text>
</comment>
<keyword id="KW-0963">Cytoplasm</keyword>
<keyword id="KW-0251">Elongation factor</keyword>
<keyword id="KW-0342">GTP-binding</keyword>
<keyword id="KW-0378">Hydrolase</keyword>
<keyword id="KW-0460">Magnesium</keyword>
<keyword id="KW-0479">Metal-binding</keyword>
<keyword id="KW-0547">Nucleotide-binding</keyword>
<keyword id="KW-0648">Protein biosynthesis</keyword>
<keyword id="KW-1185">Reference proteome</keyword>
<feature type="chain" id="PRO_1000076101" description="Elongation factor Tu">
    <location>
        <begin position="1"/>
        <end position="397"/>
    </location>
</feature>
<feature type="domain" description="tr-type G">
    <location>
        <begin position="10"/>
        <end position="206"/>
    </location>
</feature>
<feature type="region of interest" description="G1" evidence="1">
    <location>
        <begin position="19"/>
        <end position="26"/>
    </location>
</feature>
<feature type="region of interest" description="G2" evidence="1">
    <location>
        <begin position="62"/>
        <end position="66"/>
    </location>
</feature>
<feature type="region of interest" description="G3" evidence="1">
    <location>
        <begin position="83"/>
        <end position="86"/>
    </location>
</feature>
<feature type="region of interest" description="G4" evidence="1">
    <location>
        <begin position="138"/>
        <end position="141"/>
    </location>
</feature>
<feature type="region of interest" description="G5" evidence="1">
    <location>
        <begin position="176"/>
        <end position="178"/>
    </location>
</feature>
<feature type="binding site" evidence="2">
    <location>
        <begin position="19"/>
        <end position="26"/>
    </location>
    <ligand>
        <name>GTP</name>
        <dbReference type="ChEBI" id="CHEBI:37565"/>
    </ligand>
</feature>
<feature type="binding site" evidence="2">
    <location>
        <position position="26"/>
    </location>
    <ligand>
        <name>Mg(2+)</name>
        <dbReference type="ChEBI" id="CHEBI:18420"/>
    </ligand>
</feature>
<feature type="binding site" evidence="2">
    <location>
        <begin position="83"/>
        <end position="87"/>
    </location>
    <ligand>
        <name>GTP</name>
        <dbReference type="ChEBI" id="CHEBI:37565"/>
    </ligand>
</feature>
<feature type="binding site" evidence="2">
    <location>
        <begin position="138"/>
        <end position="141"/>
    </location>
    <ligand>
        <name>GTP</name>
        <dbReference type="ChEBI" id="CHEBI:37565"/>
    </ligand>
</feature>